<comment type="function">
    <text evidence="2">Probably part of an ABC transporter complex. Probably Responsible for energy coupling to the transport system (Probable).</text>
</comment>
<comment type="subunit">
    <text evidence="2">The complex is composed of two ATP-binding proteins (BMEII0108), two transmembrane proteins (BMEII0107) and a solute-binding protein (BMEII0109).</text>
</comment>
<comment type="subcellular location">
    <subcellularLocation>
        <location evidence="2">Cell inner membrane</location>
        <topology evidence="2">Peripheral membrane protein</topology>
    </subcellularLocation>
</comment>
<comment type="similarity">
    <text evidence="2">Belongs to the ABC transporter superfamily.</text>
</comment>
<comment type="sequence caution" evidence="2">
    <conflict type="erroneous initiation">
        <sequence resource="EMBL-CDS" id="AAL53349"/>
    </conflict>
</comment>
<reference key="1">
    <citation type="journal article" date="2002" name="Proc. Natl. Acad. Sci. U.S.A.">
        <title>The genome sequence of the facultative intracellular pathogen Brucella melitensis.</title>
        <authorList>
            <person name="DelVecchio V.G."/>
            <person name="Kapatral V."/>
            <person name="Redkar R.J."/>
            <person name="Patra G."/>
            <person name="Mujer C."/>
            <person name="Los T."/>
            <person name="Ivanova N."/>
            <person name="Anderson I."/>
            <person name="Bhattacharyya A."/>
            <person name="Lykidis A."/>
            <person name="Reznik G."/>
            <person name="Jablonski L."/>
            <person name="Larsen N."/>
            <person name="D'Souza M."/>
            <person name="Bernal A."/>
            <person name="Mazur M."/>
            <person name="Goltsman E."/>
            <person name="Selkov E."/>
            <person name="Elzer P.H."/>
            <person name="Hagius S."/>
            <person name="O'Callaghan D."/>
            <person name="Letesson J.-J."/>
            <person name="Haselkorn R."/>
            <person name="Kyrpides N.C."/>
            <person name="Overbeek R."/>
        </authorList>
    </citation>
    <scope>NUCLEOTIDE SEQUENCE [LARGE SCALE GENOMIC DNA]</scope>
    <source>
        <strain>ATCC 23456 / CCUG 17765 / NCTC 10094 / 16M</strain>
    </source>
</reference>
<proteinExistence type="inferred from homology"/>
<protein>
    <recommendedName>
        <fullName>Putative ATP-binding protein BMEII0108</fullName>
        <ecNumber>7.-.-.-</ecNumber>
    </recommendedName>
</protein>
<accession>Q8YDR7</accession>
<organism>
    <name type="scientific">Brucella melitensis biotype 1 (strain ATCC 23456 / CCUG 17765 / NCTC 10094 / 16M)</name>
    <dbReference type="NCBI Taxonomy" id="224914"/>
    <lineage>
        <taxon>Bacteria</taxon>
        <taxon>Pseudomonadati</taxon>
        <taxon>Pseudomonadota</taxon>
        <taxon>Alphaproteobacteria</taxon>
        <taxon>Hyphomicrobiales</taxon>
        <taxon>Brucellaceae</taxon>
        <taxon>Brucella/Ochrobactrum group</taxon>
        <taxon>Brucella</taxon>
    </lineage>
</organism>
<keyword id="KW-0067">ATP-binding</keyword>
<keyword id="KW-0997">Cell inner membrane</keyword>
<keyword id="KW-1003">Cell membrane</keyword>
<keyword id="KW-0472">Membrane</keyword>
<keyword id="KW-0547">Nucleotide-binding</keyword>
<keyword id="KW-1278">Translocase</keyword>
<keyword id="KW-0813">Transport</keyword>
<evidence type="ECO:0000255" key="1">
    <source>
        <dbReference type="PROSITE-ProRule" id="PRU00434"/>
    </source>
</evidence>
<evidence type="ECO:0000305" key="2"/>
<gene>
    <name type="ordered locus">BMEII0108</name>
</gene>
<name>Y3108_BRUME</name>
<sequence>MKPKISFNNVVMRYGGFLALDRLNLDIADGEFVTVVGPSGCGKSTAMNIADGLLQPSGGGILVGDKPVTGPGPERGVIFQQYALFPWLTVRQNVEFGLTDFADALPKALSGGMKQRCAIARAYAAAPEILLMDEPFGALDALTRVHMQDQLLDAWSRERRTVMFITHDVDEAVYLANRVIVMAARPGRLDQIIPVDLPYPRTEAIRLSPEFAAIRNRVWHAVYHQQPQTDQQSSHGQ</sequence>
<dbReference type="EC" id="7.-.-.-"/>
<dbReference type="EMBL" id="AE008918">
    <property type="protein sequence ID" value="AAL53349.1"/>
    <property type="status" value="ALT_INIT"/>
    <property type="molecule type" value="Genomic_DNA"/>
</dbReference>
<dbReference type="PIR" id="AB3523">
    <property type="entry name" value="AB3523"/>
</dbReference>
<dbReference type="RefSeq" id="WP_004686821.1">
    <property type="nucleotide sequence ID" value="NZ_GG703779.1"/>
</dbReference>
<dbReference type="SMR" id="Q8YDR7"/>
<dbReference type="GeneID" id="29595688"/>
<dbReference type="KEGG" id="bme:BMEII0108"/>
<dbReference type="KEGG" id="bmel:DK63_3137"/>
<dbReference type="PATRIC" id="fig|224914.52.peg.3285"/>
<dbReference type="eggNOG" id="COG1116">
    <property type="taxonomic scope" value="Bacteria"/>
</dbReference>
<dbReference type="PhylomeDB" id="Q8YDR7"/>
<dbReference type="Proteomes" id="UP000000419">
    <property type="component" value="Chromosome II"/>
</dbReference>
<dbReference type="GO" id="GO:0005886">
    <property type="term" value="C:plasma membrane"/>
    <property type="evidence" value="ECO:0007669"/>
    <property type="project" value="UniProtKB-SubCell"/>
</dbReference>
<dbReference type="GO" id="GO:0005524">
    <property type="term" value="F:ATP binding"/>
    <property type="evidence" value="ECO:0007669"/>
    <property type="project" value="UniProtKB-KW"/>
</dbReference>
<dbReference type="GO" id="GO:0016887">
    <property type="term" value="F:ATP hydrolysis activity"/>
    <property type="evidence" value="ECO:0007669"/>
    <property type="project" value="InterPro"/>
</dbReference>
<dbReference type="CDD" id="cd03293">
    <property type="entry name" value="ABC_NrtD_SsuB_transporters"/>
    <property type="match status" value="1"/>
</dbReference>
<dbReference type="Gene3D" id="3.40.50.300">
    <property type="entry name" value="P-loop containing nucleotide triphosphate hydrolases"/>
    <property type="match status" value="2"/>
</dbReference>
<dbReference type="InterPro" id="IPR003593">
    <property type="entry name" value="AAA+_ATPase"/>
</dbReference>
<dbReference type="InterPro" id="IPR003439">
    <property type="entry name" value="ABC_transporter-like_ATP-bd"/>
</dbReference>
<dbReference type="InterPro" id="IPR050166">
    <property type="entry name" value="ABC_transporter_ATP-bind"/>
</dbReference>
<dbReference type="InterPro" id="IPR027417">
    <property type="entry name" value="P-loop_NTPase"/>
</dbReference>
<dbReference type="InterPro" id="IPR013283">
    <property type="entry name" value="RLI1"/>
</dbReference>
<dbReference type="PANTHER" id="PTHR42788:SF13">
    <property type="entry name" value="ALIPHATIC SULFONATES IMPORT ATP-BINDING PROTEIN SSUB"/>
    <property type="match status" value="1"/>
</dbReference>
<dbReference type="PANTHER" id="PTHR42788">
    <property type="entry name" value="TAURINE IMPORT ATP-BINDING PROTEIN-RELATED"/>
    <property type="match status" value="1"/>
</dbReference>
<dbReference type="Pfam" id="PF00005">
    <property type="entry name" value="ABC_tran"/>
    <property type="match status" value="1"/>
</dbReference>
<dbReference type="PRINTS" id="PR01868">
    <property type="entry name" value="ABCEFAMILY"/>
</dbReference>
<dbReference type="SMART" id="SM00382">
    <property type="entry name" value="AAA"/>
    <property type="match status" value="1"/>
</dbReference>
<dbReference type="SUPFAM" id="SSF52540">
    <property type="entry name" value="P-loop containing nucleoside triphosphate hydrolases"/>
    <property type="match status" value="1"/>
</dbReference>
<dbReference type="PROSITE" id="PS50893">
    <property type="entry name" value="ABC_TRANSPORTER_2"/>
    <property type="match status" value="1"/>
</dbReference>
<feature type="chain" id="PRO_0000284108" description="Putative ATP-binding protein BMEII0108">
    <location>
        <begin position="1"/>
        <end position="237"/>
    </location>
</feature>
<feature type="domain" description="ABC transporter" evidence="1">
    <location>
        <begin position="5"/>
        <end position="205"/>
    </location>
</feature>
<feature type="binding site" evidence="1">
    <location>
        <begin position="37"/>
        <end position="44"/>
    </location>
    <ligand>
        <name>ATP</name>
        <dbReference type="ChEBI" id="CHEBI:30616"/>
    </ligand>
</feature>